<keyword id="KW-0029">Amino-acid transport</keyword>
<keyword id="KW-0325">Glycoprotein</keyword>
<keyword id="KW-0406">Ion transport</keyword>
<keyword id="KW-0472">Membrane</keyword>
<keyword id="KW-1185">Reference proteome</keyword>
<keyword id="KW-0915">Sodium</keyword>
<keyword id="KW-0739">Sodium transport</keyword>
<keyword id="KW-0812">Transmembrane</keyword>
<keyword id="KW-1133">Transmembrane helix</keyword>
<keyword id="KW-0813">Transport</keyword>
<proteinExistence type="evidence at transcript level"/>
<protein>
    <recommendedName>
        <fullName>Putative sodium-coupled neutral amino acid transporter 11</fullName>
    </recommendedName>
    <alternativeName>
        <fullName>Solute carrier family 38 member 11</fullName>
    </alternativeName>
</protein>
<sequence length="456" mass="50480">MRAGPRRQHLLPPQDNRAAVGYQRQDPVIPPQRDLDDRETLVSEHEHKEKTCQSAALFNVVNSIIGSGIIDFSLILLIKGGALSGTDTYQSLVNKTFGFPGYILLSVLQFLYPFIAMISYNIIAGDTLSKVFQRIPGVDPENVFIGRHFIIGLSTVTFTLPLSLYRNIAKLGKVSLISTGLTTLILGIVMARAISLGPHIPKTEDAWVFAKPNAIQAVGVMSFAFICHHNSFLVYSSLEEPTVAKWSRLIHMSIVISVFICIFFATCGYLTFTGFTQGDLFENYCRNDDLVTFGRFCYGVTVILTYPMECFVTREVIANVFFGGNLSSVFHIVVTVMVITVATLVSLLIDCLGIVLELNGVLCATPLIFIIPSACYLKLSEEPRTHSDKIMSYVMLPIGAAVMVFGFVMAITNPQDCTHGQEMFYCFPDNFSLTNTSESHIQQTTQLSILNISIFQ</sequence>
<evidence type="ECO:0000250" key="1"/>
<evidence type="ECO:0000255" key="2"/>
<evidence type="ECO:0000256" key="3">
    <source>
        <dbReference type="SAM" id="MobiDB-lite"/>
    </source>
</evidence>
<evidence type="ECO:0000305" key="4"/>
<accession>Q8HXI3</accession>
<dbReference type="EMBL" id="AB097535">
    <property type="protein sequence ID" value="BAC41760.1"/>
    <property type="molecule type" value="mRNA"/>
</dbReference>
<dbReference type="RefSeq" id="NP_001270917.1">
    <property type="nucleotide sequence ID" value="NM_001283988.1"/>
</dbReference>
<dbReference type="STRING" id="9541.ENSMFAP00000033579"/>
<dbReference type="GlyCosmos" id="Q8HXI3">
    <property type="glycosylation" value="2 sites, No reported glycans"/>
</dbReference>
<dbReference type="eggNOG" id="KOG1305">
    <property type="taxonomic scope" value="Eukaryota"/>
</dbReference>
<dbReference type="Proteomes" id="UP000233100">
    <property type="component" value="Unplaced"/>
</dbReference>
<dbReference type="GO" id="GO:0016020">
    <property type="term" value="C:membrane"/>
    <property type="evidence" value="ECO:0007669"/>
    <property type="project" value="UniProtKB-SubCell"/>
</dbReference>
<dbReference type="GO" id="GO:0015179">
    <property type="term" value="F:L-amino acid transmembrane transporter activity"/>
    <property type="evidence" value="ECO:0007669"/>
    <property type="project" value="TreeGrafter"/>
</dbReference>
<dbReference type="GO" id="GO:0006814">
    <property type="term" value="P:sodium ion transport"/>
    <property type="evidence" value="ECO:0007669"/>
    <property type="project" value="UniProtKB-KW"/>
</dbReference>
<dbReference type="InterPro" id="IPR013057">
    <property type="entry name" value="AA_transpt_TM"/>
</dbReference>
<dbReference type="PANTHER" id="PTHR22950">
    <property type="entry name" value="AMINO ACID TRANSPORTER"/>
    <property type="match status" value="1"/>
</dbReference>
<dbReference type="PANTHER" id="PTHR22950:SF458">
    <property type="entry name" value="SODIUM-COUPLED NEUTRAL AMINO ACID TRANSPORTER 11-RELATED"/>
    <property type="match status" value="1"/>
</dbReference>
<dbReference type="Pfam" id="PF01490">
    <property type="entry name" value="Aa_trans"/>
    <property type="match status" value="1"/>
</dbReference>
<gene>
    <name type="primary">SLC38A11</name>
    <name type="ORF">QmoA-15477</name>
</gene>
<name>S38AB_MACFA</name>
<organism>
    <name type="scientific">Macaca fascicularis</name>
    <name type="common">Crab-eating macaque</name>
    <name type="synonym">Cynomolgus monkey</name>
    <dbReference type="NCBI Taxonomy" id="9541"/>
    <lineage>
        <taxon>Eukaryota</taxon>
        <taxon>Metazoa</taxon>
        <taxon>Chordata</taxon>
        <taxon>Craniata</taxon>
        <taxon>Vertebrata</taxon>
        <taxon>Euteleostomi</taxon>
        <taxon>Mammalia</taxon>
        <taxon>Eutheria</taxon>
        <taxon>Euarchontoglires</taxon>
        <taxon>Primates</taxon>
        <taxon>Haplorrhini</taxon>
        <taxon>Catarrhini</taxon>
        <taxon>Cercopithecidae</taxon>
        <taxon>Cercopithecinae</taxon>
        <taxon>Macaca</taxon>
    </lineage>
</organism>
<comment type="function">
    <text evidence="1">Putative sodium-dependent amino acid/proton antiporter.</text>
</comment>
<comment type="subcellular location">
    <subcellularLocation>
        <location evidence="4">Membrane</location>
        <topology evidence="4">Multi-pass membrane protein</topology>
    </subcellularLocation>
</comment>
<comment type="similarity">
    <text evidence="4">Belongs to the amino acid/polyamine transporter 2 family.</text>
</comment>
<reference key="1">
    <citation type="journal article" date="2001" name="Gene">
        <title>Assignment of 118 novel cDNAs of cynomolgus monkey brain to human chromosomes.</title>
        <authorList>
            <person name="Osada N."/>
            <person name="Hida M."/>
            <person name="Kususda J."/>
            <person name="Tanuma R."/>
            <person name="Iseki K."/>
            <person name="Hirata M."/>
            <person name="Suto Y."/>
            <person name="Hirai M."/>
            <person name="Terao K."/>
            <person name="Suzuki Y."/>
            <person name="Sugano S."/>
            <person name="Hashimoto K."/>
        </authorList>
    </citation>
    <scope>NUCLEOTIDE SEQUENCE [LARGE SCALE MRNA]</scope>
    <source>
        <tissue>Medulla oblongata</tissue>
    </source>
</reference>
<reference key="2">
    <citation type="journal article" date="2001" name="Gene">
        <authorList>
            <person name="Osada N."/>
            <person name="Hida M."/>
            <person name="Kusuda J."/>
            <person name="Tanuma R."/>
            <person name="Iseki K."/>
            <person name="Hirata M."/>
            <person name="Suto Y."/>
            <person name="Hirai M."/>
            <person name="Terao K."/>
            <person name="Suzuki Y."/>
            <person name="Sugano S."/>
            <person name="Hashimoto K."/>
            <person name="Kususda J."/>
        </authorList>
    </citation>
    <scope>ERRATUM OF PUBMED:11574149</scope>
</reference>
<feature type="chain" id="PRO_0000326060" description="Putative sodium-coupled neutral amino acid transporter 11">
    <location>
        <begin position="1"/>
        <end position="456"/>
    </location>
</feature>
<feature type="transmembrane region" description="Helical" evidence="2">
    <location>
        <begin position="58"/>
        <end position="78"/>
    </location>
</feature>
<feature type="transmembrane region" description="Helical" evidence="2">
    <location>
        <begin position="98"/>
        <end position="118"/>
    </location>
</feature>
<feature type="transmembrane region" description="Helical" evidence="2">
    <location>
        <begin position="143"/>
        <end position="163"/>
    </location>
</feature>
<feature type="transmembrane region" description="Helical" evidence="2">
    <location>
        <begin position="171"/>
        <end position="191"/>
    </location>
</feature>
<feature type="transmembrane region" description="Helical" evidence="2">
    <location>
        <begin position="206"/>
        <end position="226"/>
    </location>
</feature>
<feature type="transmembrane region" description="Helical" evidence="2">
    <location>
        <begin position="252"/>
        <end position="272"/>
    </location>
</feature>
<feature type="transmembrane region" description="Helical" evidence="2">
    <location>
        <begin position="291"/>
        <end position="313"/>
    </location>
</feature>
<feature type="transmembrane region" description="Helical" evidence="2">
    <location>
        <begin position="329"/>
        <end position="349"/>
    </location>
</feature>
<feature type="transmembrane region" description="Helical" evidence="2">
    <location>
        <begin position="351"/>
        <end position="371"/>
    </location>
</feature>
<feature type="transmembrane region" description="Helical" evidence="2">
    <location>
        <begin position="390"/>
        <end position="410"/>
    </location>
</feature>
<feature type="region of interest" description="Disordered" evidence="3">
    <location>
        <begin position="1"/>
        <end position="25"/>
    </location>
</feature>
<feature type="glycosylation site" description="N-linked (GlcNAc...) asparagine" evidence="2">
    <location>
        <position position="94"/>
    </location>
</feature>
<feature type="glycosylation site" description="N-linked (GlcNAc...) asparagine" evidence="2">
    <location>
        <position position="325"/>
    </location>
</feature>